<feature type="chain" id="PRO_0000354706" description="Gap junction gamma-3 protein">
    <location>
        <begin position="1"/>
        <end position="269"/>
    </location>
</feature>
<feature type="topological domain" description="Extracellular" evidence="2">
    <location>
        <begin position="1"/>
        <end position="33"/>
    </location>
</feature>
<feature type="transmembrane region" description="Helical" evidence="2">
    <location>
        <begin position="34"/>
        <end position="54"/>
    </location>
</feature>
<feature type="topological domain" description="Cytoplasmic" evidence="2">
    <location>
        <begin position="55"/>
        <end position="86"/>
    </location>
</feature>
<feature type="transmembrane region" description="Helical" evidence="2">
    <location>
        <begin position="87"/>
        <end position="107"/>
    </location>
</feature>
<feature type="topological domain" description="Extracellular" evidence="2">
    <location>
        <begin position="108"/>
        <end position="145"/>
    </location>
</feature>
<feature type="transmembrane region" description="Helical" evidence="2">
    <location>
        <begin position="146"/>
        <end position="166"/>
    </location>
</feature>
<feature type="topological domain" description="Cytoplasmic" evidence="2">
    <location>
        <begin position="167"/>
        <end position="205"/>
    </location>
</feature>
<feature type="transmembrane region" description="Helical" evidence="2">
    <location>
        <begin position="206"/>
        <end position="226"/>
    </location>
</feature>
<feature type="topological domain" description="Extracellular" evidence="2">
    <location>
        <begin position="227"/>
        <end position="269"/>
    </location>
</feature>
<feature type="modified residue" description="Phosphoserine" evidence="4">
    <location>
        <position position="261"/>
    </location>
</feature>
<dbReference type="EMBL" id="AY823670">
    <property type="protein sequence ID" value="AAX39497.1"/>
    <property type="molecule type" value="Genomic_DNA"/>
</dbReference>
<dbReference type="EMBL" id="AY289210">
    <property type="protein sequence ID" value="AAP41202.1"/>
    <property type="molecule type" value="mRNA"/>
</dbReference>
<dbReference type="EMBL" id="AY293564">
    <property type="protein sequence ID" value="AAP50246.1"/>
    <property type="molecule type" value="mRNA"/>
</dbReference>
<dbReference type="EMBL" id="AY297108">
    <property type="protein sequence ID" value="AAP51160.1"/>
    <property type="molecule type" value="mRNA"/>
</dbReference>
<dbReference type="EMBL" id="AK034037">
    <property type="protein sequence ID" value="BAC28554.1"/>
    <property type="molecule type" value="mRNA"/>
</dbReference>
<dbReference type="EMBL" id="AK045577">
    <property type="protein sequence ID" value="BAC32421.1"/>
    <property type="molecule type" value="mRNA"/>
</dbReference>
<dbReference type="EMBL" id="AK047368">
    <property type="protein sequence ID" value="BAC33038.1"/>
    <property type="molecule type" value="mRNA"/>
</dbReference>
<dbReference type="EMBL" id="AK147913">
    <property type="protein sequence ID" value="BAE28224.1"/>
    <property type="molecule type" value="mRNA"/>
</dbReference>
<dbReference type="EMBL" id="CH466529">
    <property type="protein sequence ID" value="EDL19225.1"/>
    <property type="molecule type" value="Genomic_DNA"/>
</dbReference>
<dbReference type="EMBL" id="CH466529">
    <property type="protein sequence ID" value="EDL19226.1"/>
    <property type="molecule type" value="Genomic_DNA"/>
</dbReference>
<dbReference type="EMBL" id="BC125305">
    <property type="protein sequence ID" value="AAI25306.1"/>
    <property type="molecule type" value="mRNA"/>
</dbReference>
<dbReference type="EMBL" id="AJ297318">
    <property type="protein sequence ID" value="CAC29245.1"/>
    <property type="molecule type" value="Genomic_DNA"/>
</dbReference>
<dbReference type="EMBL" id="AF503616">
    <property type="protein sequence ID" value="AAM21146.1"/>
    <property type="molecule type" value="Genomic_DNA"/>
</dbReference>
<dbReference type="CCDS" id="CCDS19782.1"/>
<dbReference type="RefSeq" id="NP_536698.2">
    <property type="nucleotide sequence ID" value="NM_080450.4"/>
</dbReference>
<dbReference type="SMR" id="Q921C1"/>
<dbReference type="FunCoup" id="Q921C1">
    <property type="interactions" value="5"/>
</dbReference>
<dbReference type="STRING" id="10090.ENSMUSP00000076367"/>
<dbReference type="TCDB" id="1.A.24.1.12">
    <property type="family name" value="the gap junction-forming connexin (connexin) family"/>
</dbReference>
<dbReference type="iPTMnet" id="Q921C1"/>
<dbReference type="PhosphoSitePlus" id="Q921C1"/>
<dbReference type="SwissPalm" id="Q921C1"/>
<dbReference type="PaxDb" id="10090-ENSMUSP00000076367"/>
<dbReference type="PeptideAtlas" id="Q921C1"/>
<dbReference type="ProteomicsDB" id="284078"/>
<dbReference type="Antibodypedia" id="3109">
    <property type="antibodies" value="173 antibodies from 28 providers"/>
</dbReference>
<dbReference type="DNASU" id="118446"/>
<dbReference type="Ensembl" id="ENSMUST00000077119.8">
    <property type="protein sequence ID" value="ENSMUSP00000076367.7"/>
    <property type="gene ID" value="ENSMUSG00000056966.8"/>
</dbReference>
<dbReference type="GeneID" id="118446"/>
<dbReference type="KEGG" id="mmu:118446"/>
<dbReference type="UCSC" id="uc009aeg.1">
    <property type="organism name" value="mouse"/>
</dbReference>
<dbReference type="AGR" id="MGI:2153041"/>
<dbReference type="CTD" id="349149"/>
<dbReference type="MGI" id="MGI:2153041">
    <property type="gene designation" value="Gjc3"/>
</dbReference>
<dbReference type="VEuPathDB" id="HostDB:ENSMUSG00000056966"/>
<dbReference type="eggNOG" id="ENOG502QVY2">
    <property type="taxonomic scope" value="Eukaryota"/>
</dbReference>
<dbReference type="GeneTree" id="ENSGT01130000278352"/>
<dbReference type="HOGENOM" id="CLU_037388_4_0_1"/>
<dbReference type="InParanoid" id="Q921C1"/>
<dbReference type="OMA" id="GCKAACY"/>
<dbReference type="OrthoDB" id="9833722at2759"/>
<dbReference type="PhylomeDB" id="Q921C1"/>
<dbReference type="TreeFam" id="TF329606"/>
<dbReference type="BioGRID-ORCS" id="118446">
    <property type="hits" value="1 hit in 79 CRISPR screens"/>
</dbReference>
<dbReference type="ChiTaRS" id="Gjc3">
    <property type="organism name" value="mouse"/>
</dbReference>
<dbReference type="PRO" id="PR:Q921C1"/>
<dbReference type="Proteomes" id="UP000000589">
    <property type="component" value="Chromosome 5"/>
</dbReference>
<dbReference type="RNAct" id="Q921C1">
    <property type="molecule type" value="protein"/>
</dbReference>
<dbReference type="Bgee" id="ENSMUSG00000056966">
    <property type="expression patterns" value="Expressed in lumbar subsegment of spinal cord and 55 other cell types or tissues"/>
</dbReference>
<dbReference type="GO" id="GO:0005922">
    <property type="term" value="C:connexin complex"/>
    <property type="evidence" value="ECO:0007669"/>
    <property type="project" value="InterPro"/>
</dbReference>
<dbReference type="GO" id="GO:0005921">
    <property type="term" value="C:gap junction"/>
    <property type="evidence" value="ECO:0000247"/>
    <property type="project" value="MGI"/>
</dbReference>
<dbReference type="GO" id="GO:0043209">
    <property type="term" value="C:myelin sheath"/>
    <property type="evidence" value="ECO:0000314"/>
    <property type="project" value="MGI"/>
</dbReference>
<dbReference type="GO" id="GO:0005243">
    <property type="term" value="F:gap junction channel activity"/>
    <property type="evidence" value="ECO:0000247"/>
    <property type="project" value="MGI"/>
</dbReference>
<dbReference type="GO" id="GO:0042802">
    <property type="term" value="F:identical protein binding"/>
    <property type="evidence" value="ECO:0000353"/>
    <property type="project" value="MGI"/>
</dbReference>
<dbReference type="GO" id="GO:0007267">
    <property type="term" value="P:cell-cell signaling"/>
    <property type="evidence" value="ECO:0000247"/>
    <property type="project" value="MGI"/>
</dbReference>
<dbReference type="GO" id="GO:0042552">
    <property type="term" value="P:myelination"/>
    <property type="evidence" value="ECO:0000315"/>
    <property type="project" value="MGI"/>
</dbReference>
<dbReference type="GO" id="GO:0007605">
    <property type="term" value="P:sensory perception of sound"/>
    <property type="evidence" value="ECO:0000315"/>
    <property type="project" value="MGI"/>
</dbReference>
<dbReference type="Gene3D" id="1.20.1440.80">
    <property type="entry name" value="Gap junction channel protein cysteine-rich domain"/>
    <property type="match status" value="1"/>
</dbReference>
<dbReference type="InterPro" id="IPR000500">
    <property type="entry name" value="Connexin"/>
</dbReference>
<dbReference type="InterPro" id="IPR019570">
    <property type="entry name" value="Connexin_CCC"/>
</dbReference>
<dbReference type="InterPro" id="IPR017990">
    <property type="entry name" value="Connexin_CS"/>
</dbReference>
<dbReference type="InterPro" id="IPR013092">
    <property type="entry name" value="Connexin_N"/>
</dbReference>
<dbReference type="InterPro" id="IPR038359">
    <property type="entry name" value="Connexin_N_sf"/>
</dbReference>
<dbReference type="PANTHER" id="PTHR11984">
    <property type="entry name" value="CONNEXIN"/>
    <property type="match status" value="1"/>
</dbReference>
<dbReference type="PANTHER" id="PTHR11984:SF56">
    <property type="entry name" value="GAP JUNCTION GAMMA-3 PROTEIN"/>
    <property type="match status" value="1"/>
</dbReference>
<dbReference type="Pfam" id="PF00029">
    <property type="entry name" value="Connexin"/>
    <property type="match status" value="1"/>
</dbReference>
<dbReference type="PRINTS" id="PR00206">
    <property type="entry name" value="CONNEXIN"/>
</dbReference>
<dbReference type="SMART" id="SM00037">
    <property type="entry name" value="CNX"/>
    <property type="match status" value="1"/>
</dbReference>
<dbReference type="SMART" id="SM01089">
    <property type="entry name" value="Connexin_CCC"/>
    <property type="match status" value="1"/>
</dbReference>
<dbReference type="PROSITE" id="PS00407">
    <property type="entry name" value="CONNEXINS_1"/>
    <property type="match status" value="1"/>
</dbReference>
<dbReference type="PROSITE" id="PS00408">
    <property type="entry name" value="CONNEXINS_2"/>
    <property type="match status" value="1"/>
</dbReference>
<comment type="function">
    <text evidence="1">One gap junction consists of a cluster of closely packed pairs of transmembrane channels, the connexons, through which materials of low MW diffuse from one cell to a neighboring cell.</text>
</comment>
<comment type="subunit">
    <text evidence="1">A connexon is composed of a hexamer of connexins.</text>
</comment>
<comment type="subcellular location">
    <subcellularLocation>
        <location evidence="1">Cell membrane</location>
        <topology evidence="1">Multi-pass membrane protein</topology>
    </subcellularLocation>
    <subcellularLocation>
        <location evidence="1">Cell junction</location>
        <location evidence="1">Gap junction</location>
    </subcellularLocation>
</comment>
<comment type="tissue specificity">
    <text>CNS specific. Expression is restricted to brain, spinal cord, and sciatic nerve.</text>
</comment>
<comment type="similarity">
    <text evidence="3">Belongs to the connexin family. Gamma-type subfamily.</text>
</comment>
<comment type="caution">
    <text evidence="3">It is uncertain whether Met-1 or Met-12 is the initiator.</text>
</comment>
<proteinExistence type="evidence at protein level"/>
<protein>
    <recommendedName>
        <fullName>Gap junction gamma-3 protein</fullName>
    </recommendedName>
    <alternativeName>
        <fullName>Connexin-29</fullName>
        <shortName>Cx29</shortName>
    </alternativeName>
    <alternativeName>
        <fullName>Gap junction epsilon-1 protein</fullName>
    </alternativeName>
</protein>
<gene>
    <name type="primary">Gjc3</name>
    <name type="synonym">Cx29</name>
    <name type="synonym">Gje1</name>
</gene>
<evidence type="ECO:0000250" key="1"/>
<evidence type="ECO:0000255" key="2"/>
<evidence type="ECO:0000305" key="3"/>
<evidence type="ECO:0007744" key="4">
    <source>
    </source>
</evidence>
<accession>Q921C1</accession>
<accession>Q53ZP5</accession>
<accession>Q8BHJ3</accession>
<reference key="1">
    <citation type="journal article" date="2006" name="Physiol. Genomics">
        <title>Comparative analysis of the paired immunoglobulin-like receptor (PILR) locus in six mammalian genomes: duplication, conversion, and the birth of new genes.</title>
        <authorList>
            <person name="Wilson M.D."/>
            <person name="Cheung J."/>
            <person name="Martindale D.W."/>
            <person name="Scherer S.W."/>
            <person name="Koop B.F."/>
        </authorList>
    </citation>
    <scope>NUCLEOTIDE SEQUENCE [GENOMIC DNA]</scope>
    <source>
        <strain>129/Sv</strain>
    </source>
</reference>
<reference key="2">
    <citation type="journal article" date="2005" name="Science">
        <title>The transcriptional landscape of the mammalian genome.</title>
        <authorList>
            <person name="Carninci P."/>
            <person name="Kasukawa T."/>
            <person name="Katayama S."/>
            <person name="Gough J."/>
            <person name="Frith M.C."/>
            <person name="Maeda N."/>
            <person name="Oyama R."/>
            <person name="Ravasi T."/>
            <person name="Lenhard B."/>
            <person name="Wells C."/>
            <person name="Kodzius R."/>
            <person name="Shimokawa K."/>
            <person name="Bajic V.B."/>
            <person name="Brenner S.E."/>
            <person name="Batalov S."/>
            <person name="Forrest A.R."/>
            <person name="Zavolan M."/>
            <person name="Davis M.J."/>
            <person name="Wilming L.G."/>
            <person name="Aidinis V."/>
            <person name="Allen J.E."/>
            <person name="Ambesi-Impiombato A."/>
            <person name="Apweiler R."/>
            <person name="Aturaliya R.N."/>
            <person name="Bailey T.L."/>
            <person name="Bansal M."/>
            <person name="Baxter L."/>
            <person name="Beisel K.W."/>
            <person name="Bersano T."/>
            <person name="Bono H."/>
            <person name="Chalk A.M."/>
            <person name="Chiu K.P."/>
            <person name="Choudhary V."/>
            <person name="Christoffels A."/>
            <person name="Clutterbuck D.R."/>
            <person name="Crowe M.L."/>
            <person name="Dalla E."/>
            <person name="Dalrymple B.P."/>
            <person name="de Bono B."/>
            <person name="Della Gatta G."/>
            <person name="di Bernardo D."/>
            <person name="Down T."/>
            <person name="Engstrom P."/>
            <person name="Fagiolini M."/>
            <person name="Faulkner G."/>
            <person name="Fletcher C.F."/>
            <person name="Fukushima T."/>
            <person name="Furuno M."/>
            <person name="Futaki S."/>
            <person name="Gariboldi M."/>
            <person name="Georgii-Hemming P."/>
            <person name="Gingeras T.R."/>
            <person name="Gojobori T."/>
            <person name="Green R.E."/>
            <person name="Gustincich S."/>
            <person name="Harbers M."/>
            <person name="Hayashi Y."/>
            <person name="Hensch T.K."/>
            <person name="Hirokawa N."/>
            <person name="Hill D."/>
            <person name="Huminiecki L."/>
            <person name="Iacono M."/>
            <person name="Ikeo K."/>
            <person name="Iwama A."/>
            <person name="Ishikawa T."/>
            <person name="Jakt M."/>
            <person name="Kanapin A."/>
            <person name="Katoh M."/>
            <person name="Kawasawa Y."/>
            <person name="Kelso J."/>
            <person name="Kitamura H."/>
            <person name="Kitano H."/>
            <person name="Kollias G."/>
            <person name="Krishnan S.P."/>
            <person name="Kruger A."/>
            <person name="Kummerfeld S.K."/>
            <person name="Kurochkin I.V."/>
            <person name="Lareau L.F."/>
            <person name="Lazarevic D."/>
            <person name="Lipovich L."/>
            <person name="Liu J."/>
            <person name="Liuni S."/>
            <person name="McWilliam S."/>
            <person name="Madan Babu M."/>
            <person name="Madera M."/>
            <person name="Marchionni L."/>
            <person name="Matsuda H."/>
            <person name="Matsuzawa S."/>
            <person name="Miki H."/>
            <person name="Mignone F."/>
            <person name="Miyake S."/>
            <person name="Morris K."/>
            <person name="Mottagui-Tabar S."/>
            <person name="Mulder N."/>
            <person name="Nakano N."/>
            <person name="Nakauchi H."/>
            <person name="Ng P."/>
            <person name="Nilsson R."/>
            <person name="Nishiguchi S."/>
            <person name="Nishikawa S."/>
            <person name="Nori F."/>
            <person name="Ohara O."/>
            <person name="Okazaki Y."/>
            <person name="Orlando V."/>
            <person name="Pang K.C."/>
            <person name="Pavan W.J."/>
            <person name="Pavesi G."/>
            <person name="Pesole G."/>
            <person name="Petrovsky N."/>
            <person name="Piazza S."/>
            <person name="Reed J."/>
            <person name="Reid J.F."/>
            <person name="Ring B.Z."/>
            <person name="Ringwald M."/>
            <person name="Rost B."/>
            <person name="Ruan Y."/>
            <person name="Salzberg S.L."/>
            <person name="Sandelin A."/>
            <person name="Schneider C."/>
            <person name="Schoenbach C."/>
            <person name="Sekiguchi K."/>
            <person name="Semple C.A."/>
            <person name="Seno S."/>
            <person name="Sessa L."/>
            <person name="Sheng Y."/>
            <person name="Shibata Y."/>
            <person name="Shimada H."/>
            <person name="Shimada K."/>
            <person name="Silva D."/>
            <person name="Sinclair B."/>
            <person name="Sperling S."/>
            <person name="Stupka E."/>
            <person name="Sugiura K."/>
            <person name="Sultana R."/>
            <person name="Takenaka Y."/>
            <person name="Taki K."/>
            <person name="Tammoja K."/>
            <person name="Tan S.L."/>
            <person name="Tang S."/>
            <person name="Taylor M.S."/>
            <person name="Tegner J."/>
            <person name="Teichmann S.A."/>
            <person name="Ueda H.R."/>
            <person name="van Nimwegen E."/>
            <person name="Verardo R."/>
            <person name="Wei C.L."/>
            <person name="Yagi K."/>
            <person name="Yamanishi H."/>
            <person name="Zabarovsky E."/>
            <person name="Zhu S."/>
            <person name="Zimmer A."/>
            <person name="Hide W."/>
            <person name="Bult C."/>
            <person name="Grimmond S.M."/>
            <person name="Teasdale R.D."/>
            <person name="Liu E.T."/>
            <person name="Brusic V."/>
            <person name="Quackenbush J."/>
            <person name="Wahlestedt C."/>
            <person name="Mattick J.S."/>
            <person name="Hume D.A."/>
            <person name="Kai C."/>
            <person name="Sasaki D."/>
            <person name="Tomaru Y."/>
            <person name="Fukuda S."/>
            <person name="Kanamori-Katayama M."/>
            <person name="Suzuki M."/>
            <person name="Aoki J."/>
            <person name="Arakawa T."/>
            <person name="Iida J."/>
            <person name="Imamura K."/>
            <person name="Itoh M."/>
            <person name="Kato T."/>
            <person name="Kawaji H."/>
            <person name="Kawagashira N."/>
            <person name="Kawashima T."/>
            <person name="Kojima M."/>
            <person name="Kondo S."/>
            <person name="Konno H."/>
            <person name="Nakano K."/>
            <person name="Ninomiya N."/>
            <person name="Nishio T."/>
            <person name="Okada M."/>
            <person name="Plessy C."/>
            <person name="Shibata K."/>
            <person name="Shiraki T."/>
            <person name="Suzuki S."/>
            <person name="Tagami M."/>
            <person name="Waki K."/>
            <person name="Watahiki A."/>
            <person name="Okamura-Oho Y."/>
            <person name="Suzuki H."/>
            <person name="Kawai J."/>
            <person name="Hayashizaki Y."/>
        </authorList>
    </citation>
    <scope>NUCLEOTIDE SEQUENCE [LARGE SCALE MRNA]</scope>
    <source>
        <strain>C57BL/6J</strain>
        <tissue>Cerebellum</tissue>
        <tissue>Corpora quadrigemina</tissue>
        <tissue>Diencephalon</tissue>
    </source>
</reference>
<reference key="3">
    <citation type="submission" date="2005-07" db="EMBL/GenBank/DDBJ databases">
        <authorList>
            <person name="Mural R.J."/>
            <person name="Adams M.D."/>
            <person name="Myers E.W."/>
            <person name="Smith H.O."/>
            <person name="Venter J.C."/>
        </authorList>
    </citation>
    <scope>NUCLEOTIDE SEQUENCE [LARGE SCALE GENOMIC DNA]</scope>
</reference>
<reference key="4">
    <citation type="journal article" date="2004" name="Genome Res.">
        <title>The status, quality, and expansion of the NIH full-length cDNA project: the Mammalian Gene Collection (MGC).</title>
        <authorList>
            <consortium name="The MGC Project Team"/>
        </authorList>
    </citation>
    <scope>NUCLEOTIDE SEQUENCE [LARGE SCALE MRNA]</scope>
    <source>
        <tissue>Brain</tissue>
    </source>
</reference>
<reference key="5">
    <citation type="journal article" date="2001" name="Biol. Chem.">
        <title>The mouse gap junction gene Connexin29 is highly expressed in sciatic nerve and regulated during brain development.</title>
        <authorList>
            <person name="Soehl G."/>
            <person name="Eiberger J."/>
            <person name="Jung Y."/>
            <person name="Kozak C."/>
            <person name="Willecke K."/>
        </authorList>
    </citation>
    <scope>NUCLEOTIDE SEQUENCE [GENOMIC DNA] OF 12-269</scope>
</reference>
<reference key="6">
    <citation type="journal article" date="2002" name="J. Neurosci.">
        <title>Connexin29 is uniquely distributed within myelinating glial cells of the central and peripheral nervous systems.</title>
        <authorList>
            <person name="Altevogt B.M."/>
            <person name="Kleopa K.A."/>
            <person name="Postma F.R."/>
            <person name="Scherer S.S."/>
            <person name="Paul D.L."/>
        </authorList>
    </citation>
    <scope>NUCLEOTIDE SEQUENCE [GENOMIC DNA] OF 12-269</scope>
    <source>
        <strain>129/SvEv</strain>
    </source>
</reference>
<reference key="7">
    <citation type="journal article" date="2010" name="Cell">
        <title>A tissue-specific atlas of mouse protein phosphorylation and expression.</title>
        <authorList>
            <person name="Huttlin E.L."/>
            <person name="Jedrychowski M.P."/>
            <person name="Elias J.E."/>
            <person name="Goswami T."/>
            <person name="Rad R."/>
            <person name="Beausoleil S.A."/>
            <person name="Villen J."/>
            <person name="Haas W."/>
            <person name="Sowa M.E."/>
            <person name="Gygi S.P."/>
        </authorList>
    </citation>
    <scope>PHOSPHORYLATION [LARGE SCALE ANALYSIS] AT SER-261</scope>
    <scope>IDENTIFICATION BY MASS SPECTROMETRY [LARGE SCALE ANALYSIS]</scope>
    <source>
        <tissue>Brain</tissue>
        <tissue>Brown adipose tissue</tissue>
    </source>
</reference>
<organism>
    <name type="scientific">Mus musculus</name>
    <name type="common">Mouse</name>
    <dbReference type="NCBI Taxonomy" id="10090"/>
    <lineage>
        <taxon>Eukaryota</taxon>
        <taxon>Metazoa</taxon>
        <taxon>Chordata</taxon>
        <taxon>Craniata</taxon>
        <taxon>Vertebrata</taxon>
        <taxon>Euteleostomi</taxon>
        <taxon>Mammalia</taxon>
        <taxon>Eutheria</taxon>
        <taxon>Euarchontoglires</taxon>
        <taxon>Glires</taxon>
        <taxon>Rodentia</taxon>
        <taxon>Myomorpha</taxon>
        <taxon>Muroidea</taxon>
        <taxon>Muridae</taxon>
        <taxon>Murinae</taxon>
        <taxon>Mus</taxon>
        <taxon>Mus</taxon>
    </lineage>
</organism>
<sequence>MLLLELPIKCRMCGRFLRQLLAQESQHSTPVGRFLLPMLMGFRLLILVSSGPGVFGNDENEFICHLGQPGCKTICYDVFRPLSPLRFWAFQVILMAVPSAIYVAFTLYHVIGYWEVPGKENKEQETQISKGDHSKDVSGAKSLKLLWAYVAHLGVRLALEGAALGVQYNLYGFKMSSTFICREDPCIGSTTCFQSHPSEKTIFLNIMFGISGACFLFIFLELALLGLGRFWRIYKHKLSFLKKLPTSESSVRSKDTTDELSVVEAKEPF</sequence>
<name>CXG3_MOUSE</name>
<keyword id="KW-0965">Cell junction</keyword>
<keyword id="KW-1003">Cell membrane</keyword>
<keyword id="KW-0303">Gap junction</keyword>
<keyword id="KW-0472">Membrane</keyword>
<keyword id="KW-0597">Phosphoprotein</keyword>
<keyword id="KW-1185">Reference proteome</keyword>
<keyword id="KW-0812">Transmembrane</keyword>
<keyword id="KW-1133">Transmembrane helix</keyword>